<protein>
    <recommendedName>
        <fullName evidence="1">Photosystem II reaction center protein J</fullName>
        <shortName evidence="1">PSII-J</shortName>
    </recommendedName>
</protein>
<accession>Q0G9U8</accession>
<feature type="chain" id="PRO_0000276092" description="Photosystem II reaction center protein J">
    <location>
        <begin position="1"/>
        <end position="40"/>
    </location>
</feature>
<feature type="transmembrane region" description="Helical" evidence="1">
    <location>
        <begin position="8"/>
        <end position="28"/>
    </location>
</feature>
<sequence>MADTTGRIPLWIIGTVAGILVIGLIGIFFYGSYSGLGSSL</sequence>
<organism>
    <name type="scientific">Daucus carota</name>
    <name type="common">Wild carrot</name>
    <dbReference type="NCBI Taxonomy" id="4039"/>
    <lineage>
        <taxon>Eukaryota</taxon>
        <taxon>Viridiplantae</taxon>
        <taxon>Streptophyta</taxon>
        <taxon>Embryophyta</taxon>
        <taxon>Tracheophyta</taxon>
        <taxon>Spermatophyta</taxon>
        <taxon>Magnoliopsida</taxon>
        <taxon>eudicotyledons</taxon>
        <taxon>Gunneridae</taxon>
        <taxon>Pentapetalae</taxon>
        <taxon>asterids</taxon>
        <taxon>campanulids</taxon>
        <taxon>Apiales</taxon>
        <taxon>Apiaceae</taxon>
        <taxon>Apioideae</taxon>
        <taxon>Scandiceae</taxon>
        <taxon>Daucinae</taxon>
        <taxon>Daucus</taxon>
        <taxon>Daucus sect. Daucus</taxon>
    </lineage>
</organism>
<proteinExistence type="inferred from homology"/>
<geneLocation type="chloroplast"/>
<reference key="1">
    <citation type="journal article" date="2006" name="BMC Genomics">
        <title>Complete plastid genome sequence of Daucus carota: implications for biotechnology and phylogeny of angiosperms.</title>
        <authorList>
            <person name="Ruhlman T."/>
            <person name="Lee S.-B."/>
            <person name="Jansen R.K."/>
            <person name="Hostetler J.B."/>
            <person name="Tallon L.J."/>
            <person name="Town C.D."/>
            <person name="Daniell H."/>
        </authorList>
    </citation>
    <scope>NUCLEOTIDE SEQUENCE [LARGE SCALE GENOMIC DNA]</scope>
    <source>
        <strain>cv. Danvers Half-long</strain>
    </source>
</reference>
<dbReference type="EMBL" id="DQ898156">
    <property type="protein sequence ID" value="ABI32438.1"/>
    <property type="molecule type" value="Genomic_DNA"/>
</dbReference>
<dbReference type="RefSeq" id="YP_740131.1">
    <property type="nucleotide sequence ID" value="NC_008325.1"/>
</dbReference>
<dbReference type="SMR" id="Q0G9U8"/>
<dbReference type="GeneID" id="4266757"/>
<dbReference type="GO" id="GO:0009535">
    <property type="term" value="C:chloroplast thylakoid membrane"/>
    <property type="evidence" value="ECO:0007669"/>
    <property type="project" value="UniProtKB-SubCell"/>
</dbReference>
<dbReference type="GO" id="GO:0009539">
    <property type="term" value="C:photosystem II reaction center"/>
    <property type="evidence" value="ECO:0007669"/>
    <property type="project" value="InterPro"/>
</dbReference>
<dbReference type="GO" id="GO:0015979">
    <property type="term" value="P:photosynthesis"/>
    <property type="evidence" value="ECO:0007669"/>
    <property type="project" value="UniProtKB-UniRule"/>
</dbReference>
<dbReference type="Gene3D" id="6.10.250.2070">
    <property type="match status" value="1"/>
</dbReference>
<dbReference type="HAMAP" id="MF_01305">
    <property type="entry name" value="PSII_PsbJ"/>
    <property type="match status" value="1"/>
</dbReference>
<dbReference type="InterPro" id="IPR002682">
    <property type="entry name" value="PSII_PsbJ"/>
</dbReference>
<dbReference type="InterPro" id="IPR037267">
    <property type="entry name" value="PSII_PsbJ_sf"/>
</dbReference>
<dbReference type="NCBIfam" id="NF002722">
    <property type="entry name" value="PRK02565.1"/>
    <property type="match status" value="1"/>
</dbReference>
<dbReference type="PANTHER" id="PTHR34812">
    <property type="entry name" value="PHOTOSYSTEM II REACTION CENTER PROTEIN J"/>
    <property type="match status" value="1"/>
</dbReference>
<dbReference type="PANTHER" id="PTHR34812:SF3">
    <property type="entry name" value="PHOTOSYSTEM II REACTION CENTER PROTEIN J"/>
    <property type="match status" value="1"/>
</dbReference>
<dbReference type="Pfam" id="PF01788">
    <property type="entry name" value="PsbJ"/>
    <property type="match status" value="1"/>
</dbReference>
<dbReference type="SUPFAM" id="SSF161021">
    <property type="entry name" value="Photosystem II reaction center protein J, PsbJ"/>
    <property type="match status" value="1"/>
</dbReference>
<comment type="function">
    <text evidence="1">One of the components of the core complex of photosystem II (PSII). PSII is a light-driven water:plastoquinone oxidoreductase that uses light energy to abstract electrons from H(2)O, generating O(2) and a proton gradient subsequently used for ATP formation. It consists of a core antenna complex that captures photons, and an electron transfer chain that converts photonic excitation into a charge separation.</text>
</comment>
<comment type="subunit">
    <text evidence="1">PSII is composed of 1 copy each of membrane proteins PsbA, PsbB, PsbC, PsbD, PsbE, PsbF, PsbH, PsbI, PsbJ, PsbK, PsbL, PsbM, PsbT, PsbX, PsbY, PsbZ, Psb30/Ycf12, at least 3 peripheral proteins of the oxygen-evolving complex and a large number of cofactors. It forms dimeric complexes.</text>
</comment>
<comment type="subcellular location">
    <subcellularLocation>
        <location evidence="1">Plastid</location>
        <location evidence="1">Chloroplast thylakoid membrane</location>
        <topology evidence="1">Single-pass membrane protein</topology>
    </subcellularLocation>
</comment>
<comment type="similarity">
    <text evidence="1">Belongs to the PsbJ family.</text>
</comment>
<name>PSBJ_DAUCA</name>
<keyword id="KW-0150">Chloroplast</keyword>
<keyword id="KW-0472">Membrane</keyword>
<keyword id="KW-0602">Photosynthesis</keyword>
<keyword id="KW-0604">Photosystem II</keyword>
<keyword id="KW-0934">Plastid</keyword>
<keyword id="KW-0674">Reaction center</keyword>
<keyword id="KW-0793">Thylakoid</keyword>
<keyword id="KW-0812">Transmembrane</keyword>
<keyword id="KW-1133">Transmembrane helix</keyword>
<evidence type="ECO:0000255" key="1">
    <source>
        <dbReference type="HAMAP-Rule" id="MF_01305"/>
    </source>
</evidence>
<gene>
    <name evidence="1" type="primary">psbJ</name>
</gene>